<organism>
    <name type="scientific">Buchnera aphidicola subsp. Schizaphis graminum (strain Sg)</name>
    <dbReference type="NCBI Taxonomy" id="198804"/>
    <lineage>
        <taxon>Bacteria</taxon>
        <taxon>Pseudomonadati</taxon>
        <taxon>Pseudomonadota</taxon>
        <taxon>Gammaproteobacteria</taxon>
        <taxon>Enterobacterales</taxon>
        <taxon>Erwiniaceae</taxon>
        <taxon>Buchnera</taxon>
    </lineage>
</organism>
<dbReference type="EC" id="3.1.26.3" evidence="1"/>
<dbReference type="EMBL" id="AE013218">
    <property type="protein sequence ID" value="AAM67808.1"/>
    <property type="molecule type" value="Genomic_DNA"/>
</dbReference>
<dbReference type="RefSeq" id="WP_011053775.1">
    <property type="nucleotide sequence ID" value="NC_004061.1"/>
</dbReference>
<dbReference type="SMR" id="Q8K9R1"/>
<dbReference type="STRING" id="198804.BUsg_249"/>
<dbReference type="GeneID" id="93003719"/>
<dbReference type="KEGG" id="bas:BUsg_249"/>
<dbReference type="eggNOG" id="COG0571">
    <property type="taxonomic scope" value="Bacteria"/>
</dbReference>
<dbReference type="HOGENOM" id="CLU_000907_1_1_6"/>
<dbReference type="Proteomes" id="UP000000416">
    <property type="component" value="Chromosome"/>
</dbReference>
<dbReference type="GO" id="GO:0005737">
    <property type="term" value="C:cytoplasm"/>
    <property type="evidence" value="ECO:0007669"/>
    <property type="project" value="UniProtKB-SubCell"/>
</dbReference>
<dbReference type="GO" id="GO:0003725">
    <property type="term" value="F:double-stranded RNA binding"/>
    <property type="evidence" value="ECO:0007669"/>
    <property type="project" value="TreeGrafter"/>
</dbReference>
<dbReference type="GO" id="GO:0046872">
    <property type="term" value="F:metal ion binding"/>
    <property type="evidence" value="ECO:0007669"/>
    <property type="project" value="UniProtKB-KW"/>
</dbReference>
<dbReference type="GO" id="GO:0004525">
    <property type="term" value="F:ribonuclease III activity"/>
    <property type="evidence" value="ECO:0007669"/>
    <property type="project" value="UniProtKB-UniRule"/>
</dbReference>
<dbReference type="GO" id="GO:0019843">
    <property type="term" value="F:rRNA binding"/>
    <property type="evidence" value="ECO:0007669"/>
    <property type="project" value="UniProtKB-KW"/>
</dbReference>
<dbReference type="GO" id="GO:0006397">
    <property type="term" value="P:mRNA processing"/>
    <property type="evidence" value="ECO:0007669"/>
    <property type="project" value="UniProtKB-UniRule"/>
</dbReference>
<dbReference type="GO" id="GO:0010468">
    <property type="term" value="P:regulation of gene expression"/>
    <property type="evidence" value="ECO:0007669"/>
    <property type="project" value="TreeGrafter"/>
</dbReference>
<dbReference type="GO" id="GO:0006364">
    <property type="term" value="P:rRNA processing"/>
    <property type="evidence" value="ECO:0007669"/>
    <property type="project" value="UniProtKB-UniRule"/>
</dbReference>
<dbReference type="GO" id="GO:0008033">
    <property type="term" value="P:tRNA processing"/>
    <property type="evidence" value="ECO:0007669"/>
    <property type="project" value="UniProtKB-KW"/>
</dbReference>
<dbReference type="CDD" id="cd10845">
    <property type="entry name" value="DSRM_RNAse_III_family"/>
    <property type="match status" value="1"/>
</dbReference>
<dbReference type="CDD" id="cd00593">
    <property type="entry name" value="RIBOc"/>
    <property type="match status" value="1"/>
</dbReference>
<dbReference type="FunFam" id="1.10.1520.10:FF:000001">
    <property type="entry name" value="Ribonuclease 3"/>
    <property type="match status" value="1"/>
</dbReference>
<dbReference type="FunFam" id="3.30.160.20:FF:000003">
    <property type="entry name" value="Ribonuclease 3"/>
    <property type="match status" value="1"/>
</dbReference>
<dbReference type="Gene3D" id="3.30.160.20">
    <property type="match status" value="1"/>
</dbReference>
<dbReference type="Gene3D" id="1.10.1520.10">
    <property type="entry name" value="Ribonuclease III domain"/>
    <property type="match status" value="1"/>
</dbReference>
<dbReference type="HAMAP" id="MF_00104">
    <property type="entry name" value="RNase_III"/>
    <property type="match status" value="1"/>
</dbReference>
<dbReference type="InterPro" id="IPR014720">
    <property type="entry name" value="dsRBD_dom"/>
</dbReference>
<dbReference type="InterPro" id="IPR011907">
    <property type="entry name" value="RNase_III"/>
</dbReference>
<dbReference type="InterPro" id="IPR000999">
    <property type="entry name" value="RNase_III_dom"/>
</dbReference>
<dbReference type="InterPro" id="IPR036389">
    <property type="entry name" value="RNase_III_sf"/>
</dbReference>
<dbReference type="NCBIfam" id="TIGR02191">
    <property type="entry name" value="RNaseIII"/>
    <property type="match status" value="1"/>
</dbReference>
<dbReference type="PANTHER" id="PTHR11207:SF0">
    <property type="entry name" value="RIBONUCLEASE 3"/>
    <property type="match status" value="1"/>
</dbReference>
<dbReference type="PANTHER" id="PTHR11207">
    <property type="entry name" value="RIBONUCLEASE III"/>
    <property type="match status" value="1"/>
</dbReference>
<dbReference type="Pfam" id="PF00035">
    <property type="entry name" value="dsrm"/>
    <property type="match status" value="1"/>
</dbReference>
<dbReference type="Pfam" id="PF14622">
    <property type="entry name" value="Ribonucleas_3_3"/>
    <property type="match status" value="1"/>
</dbReference>
<dbReference type="SMART" id="SM00358">
    <property type="entry name" value="DSRM"/>
    <property type="match status" value="1"/>
</dbReference>
<dbReference type="SMART" id="SM00535">
    <property type="entry name" value="RIBOc"/>
    <property type="match status" value="1"/>
</dbReference>
<dbReference type="SUPFAM" id="SSF54768">
    <property type="entry name" value="dsRNA-binding domain-like"/>
    <property type="match status" value="1"/>
</dbReference>
<dbReference type="SUPFAM" id="SSF69065">
    <property type="entry name" value="RNase III domain-like"/>
    <property type="match status" value="1"/>
</dbReference>
<dbReference type="PROSITE" id="PS50137">
    <property type="entry name" value="DS_RBD"/>
    <property type="match status" value="1"/>
</dbReference>
<dbReference type="PROSITE" id="PS00517">
    <property type="entry name" value="RNASE_3_1"/>
    <property type="match status" value="1"/>
</dbReference>
<dbReference type="PROSITE" id="PS50142">
    <property type="entry name" value="RNASE_3_2"/>
    <property type="match status" value="1"/>
</dbReference>
<evidence type="ECO:0000255" key="1">
    <source>
        <dbReference type="HAMAP-Rule" id="MF_00104"/>
    </source>
</evidence>
<sequence length="226" mass="25681">MNHIVANKIQQILGYTFTHQELLKQALTHRSASSKHNERLEFLGDSILSFVIANALYQHFPYIDEGDMSRMRATLVRGNTLAEIAYEFDLGEYLQLGQGELKSGGFRRESILANTVEALIGSIYLDSNIKTVEELILKWYEKRLEKISPGDTQKDPKTRLQEYLQSKHLSLPSYFIVEVYGEAHNQLFTIHCEVSTLSTSFIGKGTSRRKAEQDAARKALIKLGVE</sequence>
<protein>
    <recommendedName>
        <fullName evidence="1">Ribonuclease 3</fullName>
        <ecNumber evidence="1">3.1.26.3</ecNumber>
    </recommendedName>
    <alternativeName>
        <fullName evidence="1">Ribonuclease III</fullName>
        <shortName evidence="1">RNase III</shortName>
    </alternativeName>
</protein>
<feature type="chain" id="PRO_0000180381" description="Ribonuclease 3">
    <location>
        <begin position="1"/>
        <end position="226"/>
    </location>
</feature>
<feature type="domain" description="RNase III" evidence="1">
    <location>
        <begin position="6"/>
        <end position="128"/>
    </location>
</feature>
<feature type="domain" description="DRBM" evidence="1">
    <location>
        <begin position="155"/>
        <end position="225"/>
    </location>
</feature>
<feature type="active site" evidence="1">
    <location>
        <position position="45"/>
    </location>
</feature>
<feature type="active site" evidence="1">
    <location>
        <position position="117"/>
    </location>
</feature>
<feature type="binding site" evidence="1">
    <location>
        <position position="41"/>
    </location>
    <ligand>
        <name>Mg(2+)</name>
        <dbReference type="ChEBI" id="CHEBI:18420"/>
    </ligand>
</feature>
<feature type="binding site" evidence="1">
    <location>
        <position position="114"/>
    </location>
    <ligand>
        <name>Mg(2+)</name>
        <dbReference type="ChEBI" id="CHEBI:18420"/>
    </ligand>
</feature>
<feature type="binding site" evidence="1">
    <location>
        <position position="117"/>
    </location>
    <ligand>
        <name>Mg(2+)</name>
        <dbReference type="ChEBI" id="CHEBI:18420"/>
    </ligand>
</feature>
<keyword id="KW-0963">Cytoplasm</keyword>
<keyword id="KW-0255">Endonuclease</keyword>
<keyword id="KW-0378">Hydrolase</keyword>
<keyword id="KW-0460">Magnesium</keyword>
<keyword id="KW-0479">Metal-binding</keyword>
<keyword id="KW-0507">mRNA processing</keyword>
<keyword id="KW-0540">Nuclease</keyword>
<keyword id="KW-0694">RNA-binding</keyword>
<keyword id="KW-0698">rRNA processing</keyword>
<keyword id="KW-0699">rRNA-binding</keyword>
<keyword id="KW-0819">tRNA processing</keyword>
<proteinExistence type="inferred from homology"/>
<gene>
    <name evidence="1" type="primary">rnc</name>
    <name type="ordered locus">BUsg_249</name>
</gene>
<reference key="1">
    <citation type="journal article" date="2002" name="Science">
        <title>50 million years of genomic stasis in endosymbiotic bacteria.</title>
        <authorList>
            <person name="Tamas I."/>
            <person name="Klasson L."/>
            <person name="Canbaeck B."/>
            <person name="Naeslund A.K."/>
            <person name="Eriksson A.-S."/>
            <person name="Wernegreen J.J."/>
            <person name="Sandstroem J.P."/>
            <person name="Moran N.A."/>
            <person name="Andersson S.G.E."/>
        </authorList>
    </citation>
    <scope>NUCLEOTIDE SEQUENCE [LARGE SCALE GENOMIC DNA]</scope>
    <source>
        <strain>Sg</strain>
    </source>
</reference>
<comment type="function">
    <text evidence="1">Digests double-stranded RNA. Involved in the processing of primary rRNA transcript to yield the immediate precursors to the large and small rRNAs (23S and 16S). Processes some mRNAs, and tRNAs when they are encoded in the rRNA operon. Processes pre-crRNA and tracrRNA of type II CRISPR loci if present in the organism.</text>
</comment>
<comment type="catalytic activity">
    <reaction evidence="1">
        <text>Endonucleolytic cleavage to 5'-phosphomonoester.</text>
        <dbReference type="EC" id="3.1.26.3"/>
    </reaction>
</comment>
<comment type="cofactor">
    <cofactor evidence="1">
        <name>Mg(2+)</name>
        <dbReference type="ChEBI" id="CHEBI:18420"/>
    </cofactor>
</comment>
<comment type="subunit">
    <text evidence="1">Homodimer.</text>
</comment>
<comment type="subcellular location">
    <subcellularLocation>
        <location evidence="1">Cytoplasm</location>
    </subcellularLocation>
</comment>
<comment type="similarity">
    <text evidence="1">Belongs to the ribonuclease III family.</text>
</comment>
<name>RNC_BUCAP</name>
<accession>Q8K9R1</accession>